<dbReference type="SMR" id="A7P514"/>
<dbReference type="PaxDb" id="29760-VIT_04s0008g02780.t01"/>
<dbReference type="eggNOG" id="KOG1010">
    <property type="taxonomic scope" value="Eukaryota"/>
</dbReference>
<dbReference type="ExpressionAtlas" id="A7P514">
    <property type="expression patterns" value="baseline and differential"/>
</dbReference>
<dbReference type="GO" id="GO:0005634">
    <property type="term" value="C:nucleus"/>
    <property type="evidence" value="ECO:0007669"/>
    <property type="project" value="UniProtKB-SubCell"/>
</dbReference>
<dbReference type="GO" id="GO:0010564">
    <property type="term" value="P:regulation of cell cycle process"/>
    <property type="evidence" value="ECO:0007669"/>
    <property type="project" value="UniProtKB-ARBA"/>
</dbReference>
<dbReference type="GO" id="GO:0006357">
    <property type="term" value="P:regulation of transcription by RNA polymerase II"/>
    <property type="evidence" value="ECO:0007669"/>
    <property type="project" value="InterPro"/>
</dbReference>
<dbReference type="CDD" id="cd20601">
    <property type="entry name" value="CYCLIN_AtRBR_like"/>
    <property type="match status" value="1"/>
</dbReference>
<dbReference type="FunFam" id="1.10.472.10:FF:000030">
    <property type="entry name" value="Retinoblastoma-related protein 1"/>
    <property type="match status" value="1"/>
</dbReference>
<dbReference type="FunFam" id="1.10.472.10:FF:000067">
    <property type="entry name" value="Retinoblastoma-related protein 1"/>
    <property type="match status" value="1"/>
</dbReference>
<dbReference type="FunFam" id="1.10.472.140:FF:000003">
    <property type="entry name" value="Retinoblastoma-related protein 1"/>
    <property type="match status" value="1"/>
</dbReference>
<dbReference type="Gene3D" id="1.10.472.140">
    <property type="match status" value="1"/>
</dbReference>
<dbReference type="Gene3D" id="1.10.472.10">
    <property type="entry name" value="Cyclin-like"/>
    <property type="match status" value="2"/>
</dbReference>
<dbReference type="InterPro" id="IPR036915">
    <property type="entry name" value="Cyclin-like_sf"/>
</dbReference>
<dbReference type="InterPro" id="IPR002720">
    <property type="entry name" value="RB_A"/>
</dbReference>
<dbReference type="InterPro" id="IPR002719">
    <property type="entry name" value="RB_B"/>
</dbReference>
<dbReference type="InterPro" id="IPR028309">
    <property type="entry name" value="RB_fam"/>
</dbReference>
<dbReference type="InterPro" id="IPR024599">
    <property type="entry name" value="RB_N"/>
</dbReference>
<dbReference type="PANTHER" id="PTHR13742:SF17">
    <property type="entry name" value="RE32990P-RELATED"/>
    <property type="match status" value="1"/>
</dbReference>
<dbReference type="PANTHER" id="PTHR13742">
    <property type="entry name" value="RETINOBLASTOMA-ASSOCIATED PROTEIN RB -RELATED"/>
    <property type="match status" value="1"/>
</dbReference>
<dbReference type="Pfam" id="PF11934">
    <property type="entry name" value="DUF3452"/>
    <property type="match status" value="1"/>
</dbReference>
<dbReference type="Pfam" id="PF01858">
    <property type="entry name" value="RB_A"/>
    <property type="match status" value="1"/>
</dbReference>
<dbReference type="Pfam" id="PF01857">
    <property type="entry name" value="RB_B"/>
    <property type="match status" value="1"/>
</dbReference>
<dbReference type="SMART" id="SM01367">
    <property type="entry name" value="DUF3452"/>
    <property type="match status" value="1"/>
</dbReference>
<dbReference type="SMART" id="SM01368">
    <property type="entry name" value="RB_A"/>
    <property type="match status" value="1"/>
</dbReference>
<dbReference type="SUPFAM" id="SSF47954">
    <property type="entry name" value="Cyclin-like"/>
    <property type="match status" value="2"/>
</dbReference>
<reference key="1">
    <citation type="journal article" date="2007" name="Nature">
        <title>The grapevine genome sequence suggests ancestral hexaploidization in major angiosperm phyla.</title>
        <authorList>
            <person name="Jaillon O."/>
            <person name="Aury J.-M."/>
            <person name="Noel B."/>
            <person name="Policriti A."/>
            <person name="Clepet C."/>
            <person name="Casagrande A."/>
            <person name="Choisne N."/>
            <person name="Aubourg S."/>
            <person name="Vitulo N."/>
            <person name="Jubin C."/>
            <person name="Vezzi A."/>
            <person name="Legeai F."/>
            <person name="Hugueney P."/>
            <person name="Dasilva C."/>
            <person name="Horner D."/>
            <person name="Mica E."/>
            <person name="Jublot D."/>
            <person name="Poulain J."/>
            <person name="Bruyere C."/>
            <person name="Billault A."/>
            <person name="Segurens B."/>
            <person name="Gouyvenoux M."/>
            <person name="Ugarte E."/>
            <person name="Cattonaro F."/>
            <person name="Anthouard V."/>
            <person name="Vico V."/>
            <person name="Del Fabbro C."/>
            <person name="Alaux M."/>
            <person name="Di Gaspero G."/>
            <person name="Dumas V."/>
            <person name="Felice N."/>
            <person name="Paillard S."/>
            <person name="Juman I."/>
            <person name="Moroldo M."/>
            <person name="Scalabrin S."/>
            <person name="Canaguier A."/>
            <person name="Le Clainche I."/>
            <person name="Malacrida G."/>
            <person name="Durand E."/>
            <person name="Pesole G."/>
            <person name="Laucou V."/>
            <person name="Chatelet P."/>
            <person name="Merdinoglu D."/>
            <person name="Delledonne M."/>
            <person name="Pezzotti M."/>
            <person name="Lecharny A."/>
            <person name="Scarpelli C."/>
            <person name="Artiguenave F."/>
            <person name="Pe M.E."/>
            <person name="Valle G."/>
            <person name="Morgante M."/>
            <person name="Caboche M."/>
            <person name="Adam-Blondon A.-F."/>
            <person name="Weissenbach J."/>
            <person name="Quetier F."/>
            <person name="Wincker P."/>
        </authorList>
    </citation>
    <scope>NUCLEOTIDE SEQUENCE [LARGE SCALE GENOMIC DNA]</scope>
    <source>
        <strain>cv. Pinot noir / PN40024</strain>
    </source>
</reference>
<comment type="function">
    <text evidence="1">Regulator of biological processes that recruits a histone deacetylase to control gene transcription. May play a role in the entry into mitosis, negatively regulating the cell proliferation. Formation of stable complexes with geminiviridae replication-associated proteins may create a cellular environment which favors viral DNA replication (By similarity).</text>
</comment>
<comment type="subcellular location">
    <subcellularLocation>
        <location evidence="1">Nucleus</location>
    </subcellularLocation>
</comment>
<comment type="similarity">
    <text evidence="3">Belongs to the retinoblastoma protein (RB) family.</text>
</comment>
<gene>
    <name type="primary">RBR</name>
    <name type="ORF">GSVIVT00032361001</name>
    <name type="ORF">LOC100261011</name>
</gene>
<name>RBR_VITVI</name>
<feature type="chain" id="PRO_0000380243" description="Retinoblastoma-related protein">
    <location>
        <begin position="1"/>
        <end position="1007"/>
    </location>
</feature>
<feature type="region of interest" description="Pocket" evidence="1">
    <location>
        <begin position="406"/>
        <end position="856"/>
    </location>
</feature>
<feature type="region of interest" description="Domain A" evidence="1">
    <location>
        <begin position="406"/>
        <end position="604"/>
    </location>
</feature>
<feature type="region of interest" description="Spacer" evidence="1">
    <location>
        <begin position="605"/>
        <end position="725"/>
    </location>
</feature>
<feature type="region of interest" description="Disordered" evidence="2">
    <location>
        <begin position="644"/>
        <end position="665"/>
    </location>
</feature>
<feature type="region of interest" description="Domain B" evidence="1">
    <location>
        <begin position="726"/>
        <end position="856"/>
    </location>
</feature>
<protein>
    <recommendedName>
        <fullName>Retinoblastoma-related protein</fullName>
    </recommendedName>
</protein>
<evidence type="ECO:0000250" key="1"/>
<evidence type="ECO:0000256" key="2">
    <source>
        <dbReference type="SAM" id="MobiDB-lite"/>
    </source>
</evidence>
<evidence type="ECO:0000305" key="3"/>
<organism>
    <name type="scientific">Vitis vinifera</name>
    <name type="common">Grape</name>
    <dbReference type="NCBI Taxonomy" id="29760"/>
    <lineage>
        <taxon>Eukaryota</taxon>
        <taxon>Viridiplantae</taxon>
        <taxon>Streptophyta</taxon>
        <taxon>Embryophyta</taxon>
        <taxon>Tracheophyta</taxon>
        <taxon>Spermatophyta</taxon>
        <taxon>Magnoliopsida</taxon>
        <taxon>eudicotyledons</taxon>
        <taxon>Gunneridae</taxon>
        <taxon>Pentapetalae</taxon>
        <taxon>rosids</taxon>
        <taxon>Vitales</taxon>
        <taxon>Vitaceae</taxon>
        <taxon>Viteae</taxon>
        <taxon>Vitis</taxon>
    </lineage>
</organism>
<proteinExistence type="evidence at transcript level"/>
<accession>A7P514</accession>
<sequence>MDGVKPVASAEQGGAVEARFTEFCKNGLQLDESTFAQAMKLFEESNHLLSTTSLSAIGNGVPEDSERYWFAFILYSVKRLSEGTAENVQQGNDENGFNLCQILRVSKLNIVDFFKELPQFIVKVGPILGNLYGPDWEKRLEAKELQANFVHLSILSKYYKRAYLEFFSTSGSNLDKQSSVISASGYVSDYHRFGWLLFLALRVHAFSRFKDLVTCTNGLVSILAILILHVPISFRSFTINNYPRFVKKGNKGMDLLASLCDIYETSEDEVRKTMEQTNKVIVDILKKKPCLASECKSENLASIDPDGLVYFEDLMDESSLSSSINILEKDYDAAIRNKGELDERVFINGEDSLLGSGSLSGGAMSISGAKRKIDSLASPAKTITSPLSPNRSPGILGGANSKMAPTPVTTAMTTAKWLRTVISPLPSKPSAELERFLTSCDKDVTSDVIRRANVILEAIFPSIAFGERCVTGSASLMDSIWAQQRRMEAMKLYYRVLEAMCTAEAQVLHANNLTSLLTNERFHRCMLACSAELVLATHKTVTMLFPAVLERTGITAFDLSKVIESFIRHEESLPRELRRHLNSLEERLLESMVWEKGSSMYNSLIVARAALSAEVNRLGLLAEPMPSLDAISMHINASCGGLPPVPSLQKRESSPGQNGDIRSPKRVCPDYRSVLVERNSFTSPVKDRFLALNNLKSKLPPPPLQSAFASPTRPNPGREGETCAETGINIFFSKIIKLAAVRINGMVERLQLSQQMRENVYCLFQQILNRRTSLFFNRHIDQIILCCFYGLAKISQMNLTFREIIHNYRKQPQCKPQIFRSVFVDWSSARRNGKTGKEHVDIITFYNEIFIPAVKPLLMEIGPGGGTTTKTNRVPEVNNNNDAQCPESPKISPFPSLPDMSPKKVSAAHNVYVSPLRSSKMDALISHSSKSYYACVGESTHAYQSPSKDLTAINNRLNSTRKLRGALNFDDVEGLVSDSLVAKSLYLQNGSCASSSGAPLKLEQPDT</sequence>
<keyword id="KW-0131">Cell cycle</keyword>
<keyword id="KW-0539">Nucleus</keyword>
<keyword id="KW-0678">Repressor</keyword>
<keyword id="KW-0804">Transcription</keyword>
<keyword id="KW-0805">Transcription regulation</keyword>